<organism>
    <name type="scientific">Canis lupus familiaris</name>
    <name type="common">Dog</name>
    <name type="synonym">Canis familiaris</name>
    <dbReference type="NCBI Taxonomy" id="9615"/>
    <lineage>
        <taxon>Eukaryota</taxon>
        <taxon>Metazoa</taxon>
        <taxon>Chordata</taxon>
        <taxon>Craniata</taxon>
        <taxon>Vertebrata</taxon>
        <taxon>Euteleostomi</taxon>
        <taxon>Mammalia</taxon>
        <taxon>Eutheria</taxon>
        <taxon>Laurasiatheria</taxon>
        <taxon>Carnivora</taxon>
        <taxon>Caniformia</taxon>
        <taxon>Canidae</taxon>
        <taxon>Canis</taxon>
    </lineage>
</organism>
<comment type="function">
    <text evidence="3">Anchors the extracellular matrix to the cytoskeleton via F-actin. Ligand for dystroglycan. Component of the dystrophin-associated glycoprotein complex which accumulates at the neuromuscular junction (NMJ) and at a variety of synapses in the peripheral and central nervous systems and has a structural function in stabilizing the sarcolemma. Also implicated in signaling events and synaptic transmission.</text>
</comment>
<comment type="subunit">
    <text evidence="2 3 4">Interacts with SYNM (By similarity). Interacts with the syntrophins SNTG1 and SNTG2. Interacts with KRT19. Component of the dystrophin-associated glycoprotein complex which is composed of three subcomplexes: a cytoplasmic complex comprised of DMD (or UTRN), DTNA and a number of syntrophins, such as SNTB1, SNTB2, SNTG1 and SNTG2, the transmembrane dystroglycan complex, and the sarcoglycan-sarcospan complex. Interacts with DAG1 (betaDAG1) with DMD; the interaction is inhibited by phosphorylation on the PPXY motif of DAG1 (By similarity). Interacts with SYNM; SNTA1 and SNTB1. Interacts with CMYA5. Directly interacts with ANK2 and ANK3; these interactions do not interfere with betaDAG1-binding and are necessary for proper localization in muscle cells. Identified in a dystroglycan complex that contains at least PRX, DRP2, UTRN, DMD and DAG1 (By similarity). Interacts with DTNB (By similarity). Interacts with PGM5; the interaction is direct (By similarity). Interacts with NOS1; localizes NOS1 to sarcolemma in muscle cells (By similarity).</text>
</comment>
<comment type="subcellular location">
    <subcellularLocation>
        <location evidence="3">Cell membrane</location>
        <location evidence="3">Sarcolemma</location>
        <topology evidence="3">Peripheral membrane protein</topology>
        <orientation evidence="3">Cytoplasmic side</orientation>
    </subcellularLocation>
    <subcellularLocation>
        <location evidence="3">Cytoplasm</location>
        <location evidence="3">Cytoskeleton</location>
    </subcellularLocation>
    <subcellularLocation>
        <location evidence="3">Postsynaptic cell membrane</location>
    </subcellularLocation>
    <text evidence="3">In muscle cells, sarcolemma localization requires the presence of ANK2, while localization to costameres requires the presence of ANK3. Localizes to neuromuscular junctions (NMJs). In adult muscle, NMJ localization depends upon ANK2 presence, but not in newborn animals.</text>
</comment>
<dbReference type="EMBL" id="AF070485">
    <property type="protein sequence ID" value="AAC83646.1"/>
    <property type="molecule type" value="mRNA"/>
</dbReference>
<dbReference type="RefSeq" id="NP_001003343.1">
    <property type="nucleotide sequence ID" value="NM_001003343.1"/>
</dbReference>
<dbReference type="SMR" id="O97592"/>
<dbReference type="FunCoup" id="O97592">
    <property type="interactions" value="170"/>
</dbReference>
<dbReference type="STRING" id="9615.ENSCAFP00000031637"/>
<dbReference type="PaxDb" id="9612-ENSCAFP00000031637"/>
<dbReference type="GeneID" id="606758"/>
<dbReference type="KEGG" id="cfa:606758"/>
<dbReference type="CTD" id="1756"/>
<dbReference type="eggNOG" id="KOG4286">
    <property type="taxonomic scope" value="Eukaryota"/>
</dbReference>
<dbReference type="InParanoid" id="O97592"/>
<dbReference type="OrthoDB" id="10057795at2759"/>
<dbReference type="Proteomes" id="UP000002254">
    <property type="component" value="Unplaced"/>
</dbReference>
<dbReference type="Proteomes" id="UP000694429">
    <property type="component" value="Unplaced"/>
</dbReference>
<dbReference type="Proteomes" id="UP000694542">
    <property type="component" value="Unplaced"/>
</dbReference>
<dbReference type="Proteomes" id="UP000805418">
    <property type="component" value="Unplaced"/>
</dbReference>
<dbReference type="GO" id="GO:0005737">
    <property type="term" value="C:cytoplasm"/>
    <property type="evidence" value="ECO:0007669"/>
    <property type="project" value="UniProtKB-KW"/>
</dbReference>
<dbReference type="GO" id="GO:0005856">
    <property type="term" value="C:cytoskeleton"/>
    <property type="evidence" value="ECO:0007669"/>
    <property type="project" value="UniProtKB-SubCell"/>
</dbReference>
<dbReference type="GO" id="GO:0016010">
    <property type="term" value="C:dystrophin-associated glycoprotein complex"/>
    <property type="evidence" value="ECO:0007669"/>
    <property type="project" value="UniProtKB-ARBA"/>
</dbReference>
<dbReference type="GO" id="GO:0120025">
    <property type="term" value="C:plasma membrane bounded cell projection"/>
    <property type="evidence" value="ECO:0007669"/>
    <property type="project" value="UniProtKB-ARBA"/>
</dbReference>
<dbReference type="GO" id="GO:0045211">
    <property type="term" value="C:postsynaptic membrane"/>
    <property type="evidence" value="ECO:0007669"/>
    <property type="project" value="UniProtKB-SubCell"/>
</dbReference>
<dbReference type="GO" id="GO:0042383">
    <property type="term" value="C:sarcolemma"/>
    <property type="evidence" value="ECO:0000318"/>
    <property type="project" value="GO_Central"/>
</dbReference>
<dbReference type="GO" id="GO:0003779">
    <property type="term" value="F:actin binding"/>
    <property type="evidence" value="ECO:0007669"/>
    <property type="project" value="UniProtKB-KW"/>
</dbReference>
<dbReference type="GO" id="GO:0008270">
    <property type="term" value="F:zinc ion binding"/>
    <property type="evidence" value="ECO:0007669"/>
    <property type="project" value="UniProtKB-KW"/>
</dbReference>
<dbReference type="GO" id="GO:0055001">
    <property type="term" value="P:muscle cell development"/>
    <property type="evidence" value="ECO:0000318"/>
    <property type="project" value="GO_Central"/>
</dbReference>
<dbReference type="GO" id="GO:0048666">
    <property type="term" value="P:neuron development"/>
    <property type="evidence" value="ECO:0000318"/>
    <property type="project" value="GO_Central"/>
</dbReference>
<dbReference type="GO" id="GO:0090257">
    <property type="term" value="P:regulation of muscle system process"/>
    <property type="evidence" value="ECO:0000318"/>
    <property type="project" value="GO_Central"/>
</dbReference>
<dbReference type="GO" id="GO:0007519">
    <property type="term" value="P:skeletal muscle tissue development"/>
    <property type="evidence" value="ECO:0000318"/>
    <property type="project" value="GO_Central"/>
</dbReference>
<dbReference type="GO" id="GO:0099536">
    <property type="term" value="P:synaptic signaling"/>
    <property type="evidence" value="ECO:0000318"/>
    <property type="project" value="GO_Central"/>
</dbReference>
<dbReference type="CDD" id="cd21231">
    <property type="entry name" value="CH_DMD_rpt1"/>
    <property type="match status" value="1"/>
</dbReference>
<dbReference type="CDD" id="cd21233">
    <property type="entry name" value="CH_DMD_rpt2"/>
    <property type="match status" value="1"/>
</dbReference>
<dbReference type="CDD" id="cd16246">
    <property type="entry name" value="EFh_DMD"/>
    <property type="match status" value="1"/>
</dbReference>
<dbReference type="CDD" id="cd00176">
    <property type="entry name" value="SPEC"/>
    <property type="match status" value="10"/>
</dbReference>
<dbReference type="CDD" id="cd00201">
    <property type="entry name" value="WW"/>
    <property type="match status" value="1"/>
</dbReference>
<dbReference type="CDD" id="cd02334">
    <property type="entry name" value="ZZ_dystrophin"/>
    <property type="match status" value="1"/>
</dbReference>
<dbReference type="FunFam" id="1.20.58.60:FF:000118">
    <property type="entry name" value="Dystrophin"/>
    <property type="match status" value="1"/>
</dbReference>
<dbReference type="FunFam" id="1.20.58.60:FF:000129">
    <property type="entry name" value="Dystrophin"/>
    <property type="match status" value="1"/>
</dbReference>
<dbReference type="FunFam" id="1.20.58.60:FF:000170">
    <property type="entry name" value="Dystrophin"/>
    <property type="match status" value="1"/>
</dbReference>
<dbReference type="FunFam" id="1.20.58.60:FF:000207">
    <property type="entry name" value="Dystrophin"/>
    <property type="match status" value="1"/>
</dbReference>
<dbReference type="FunFam" id="1.20.58.60:FF:000283">
    <property type="entry name" value="Dystrophin"/>
    <property type="match status" value="1"/>
</dbReference>
<dbReference type="FunFam" id="1.10.238.10:FF:000008">
    <property type="entry name" value="Dystrophin isoform 2"/>
    <property type="match status" value="1"/>
</dbReference>
<dbReference type="FunFam" id="3.30.60.90:FF:000001">
    <property type="entry name" value="Dystrophin isoform 2"/>
    <property type="match status" value="1"/>
</dbReference>
<dbReference type="FunFam" id="1.10.238.10:FF:000023">
    <property type="entry name" value="dystrophin isoform X1"/>
    <property type="match status" value="1"/>
</dbReference>
<dbReference type="FunFam" id="1.20.58.60:FF:000140">
    <property type="entry name" value="dystrophin isoform X1"/>
    <property type="match status" value="1"/>
</dbReference>
<dbReference type="FunFam" id="2.20.70.10:FF:000004">
    <property type="entry name" value="dystrophin isoform X1"/>
    <property type="match status" value="1"/>
</dbReference>
<dbReference type="FunFam" id="1.20.58.60:FF:000091">
    <property type="entry name" value="dystrophin isoform X2"/>
    <property type="match status" value="1"/>
</dbReference>
<dbReference type="FunFam" id="1.20.58.60:FF:000146">
    <property type="entry name" value="dystrophin isoform X2"/>
    <property type="match status" value="1"/>
</dbReference>
<dbReference type="FunFam" id="1.20.58.60:FF:000162">
    <property type="entry name" value="dystrophin isoform X2"/>
    <property type="match status" value="1"/>
</dbReference>
<dbReference type="FunFam" id="1.20.58.60:FF:000183">
    <property type="entry name" value="dystrophin isoform X2"/>
    <property type="match status" value="1"/>
</dbReference>
<dbReference type="FunFam" id="1.20.58.60:FF:000239">
    <property type="entry name" value="dystrophin isoform X2"/>
    <property type="match status" value="1"/>
</dbReference>
<dbReference type="FunFam" id="1.20.58.60:FF:000274">
    <property type="entry name" value="dystrophin isoform X2"/>
    <property type="match status" value="1"/>
</dbReference>
<dbReference type="FunFam" id="1.10.418.10:FF:000032">
    <property type="entry name" value="utrophin isoform X1"/>
    <property type="match status" value="1"/>
</dbReference>
<dbReference type="FunFam" id="1.20.58.60:FF:000029">
    <property type="entry name" value="utrophin isoform X1"/>
    <property type="match status" value="1"/>
</dbReference>
<dbReference type="FunFam" id="1.20.58.60:FF:000056">
    <property type="entry name" value="utrophin isoform X1"/>
    <property type="match status" value="1"/>
</dbReference>
<dbReference type="FunFam" id="1.20.58.60:FF:000070">
    <property type="entry name" value="utrophin isoform X1"/>
    <property type="match status" value="1"/>
</dbReference>
<dbReference type="FunFam" id="1.20.58.60:FF:000075">
    <property type="entry name" value="utrophin isoform X1"/>
    <property type="match status" value="1"/>
</dbReference>
<dbReference type="FunFam" id="1.10.418.10:FF:000044">
    <property type="entry name" value="utrophin isoform X2"/>
    <property type="match status" value="1"/>
</dbReference>
<dbReference type="FunFam" id="1.20.58.60:FF:000102">
    <property type="entry name" value="utrophin isoform X2"/>
    <property type="match status" value="1"/>
</dbReference>
<dbReference type="Gene3D" id="1.20.58.60">
    <property type="match status" value="17"/>
</dbReference>
<dbReference type="Gene3D" id="2.20.70.10">
    <property type="match status" value="1"/>
</dbReference>
<dbReference type="Gene3D" id="3.30.60.90">
    <property type="match status" value="1"/>
</dbReference>
<dbReference type="Gene3D" id="1.10.418.10">
    <property type="entry name" value="Calponin-like domain"/>
    <property type="match status" value="2"/>
</dbReference>
<dbReference type="Gene3D" id="1.10.238.10">
    <property type="entry name" value="EF-hand"/>
    <property type="match status" value="2"/>
</dbReference>
<dbReference type="InterPro" id="IPR001589">
    <property type="entry name" value="Actinin_actin-bd_CS"/>
</dbReference>
<dbReference type="InterPro" id="IPR001715">
    <property type="entry name" value="CH_dom"/>
</dbReference>
<dbReference type="InterPro" id="IPR036872">
    <property type="entry name" value="CH_dom_sf"/>
</dbReference>
<dbReference type="InterPro" id="IPR035436">
    <property type="entry name" value="Dystrophin/utrophin"/>
</dbReference>
<dbReference type="InterPro" id="IPR011992">
    <property type="entry name" value="EF-hand-dom_pair"/>
</dbReference>
<dbReference type="InterPro" id="IPR015153">
    <property type="entry name" value="EF-hand_dom_typ1"/>
</dbReference>
<dbReference type="InterPro" id="IPR015154">
    <property type="entry name" value="EF-hand_dom_typ2"/>
</dbReference>
<dbReference type="InterPro" id="IPR050774">
    <property type="entry name" value="KCMF1/Dystrophin"/>
</dbReference>
<dbReference type="InterPro" id="IPR018159">
    <property type="entry name" value="Spectrin/alpha-actinin"/>
</dbReference>
<dbReference type="InterPro" id="IPR002017">
    <property type="entry name" value="Spectrin_repeat"/>
</dbReference>
<dbReference type="InterPro" id="IPR001202">
    <property type="entry name" value="WW_dom"/>
</dbReference>
<dbReference type="InterPro" id="IPR036020">
    <property type="entry name" value="WW_dom_sf"/>
</dbReference>
<dbReference type="InterPro" id="IPR000433">
    <property type="entry name" value="Znf_ZZ"/>
</dbReference>
<dbReference type="InterPro" id="IPR043145">
    <property type="entry name" value="Znf_ZZ_sf"/>
</dbReference>
<dbReference type="PANTHER" id="PTHR12268:SF14">
    <property type="entry name" value="DYSTROPHIN-1"/>
    <property type="match status" value="1"/>
</dbReference>
<dbReference type="PANTHER" id="PTHR12268">
    <property type="entry name" value="E3 UBIQUITIN-PROTEIN LIGASE KCMF1"/>
    <property type="match status" value="1"/>
</dbReference>
<dbReference type="Pfam" id="PF00307">
    <property type="entry name" value="CH"/>
    <property type="match status" value="2"/>
</dbReference>
<dbReference type="Pfam" id="PF09068">
    <property type="entry name" value="EF-hand_2"/>
    <property type="match status" value="1"/>
</dbReference>
<dbReference type="Pfam" id="PF09069">
    <property type="entry name" value="EF-hand_3"/>
    <property type="match status" value="1"/>
</dbReference>
<dbReference type="Pfam" id="PF00435">
    <property type="entry name" value="Spectrin"/>
    <property type="match status" value="16"/>
</dbReference>
<dbReference type="Pfam" id="PF00397">
    <property type="entry name" value="WW"/>
    <property type="match status" value="1"/>
</dbReference>
<dbReference type="Pfam" id="PF00569">
    <property type="entry name" value="ZZ"/>
    <property type="match status" value="1"/>
</dbReference>
<dbReference type="PIRSF" id="PIRSF002341">
    <property type="entry name" value="Dystrophin/utrophin"/>
    <property type="match status" value="1"/>
</dbReference>
<dbReference type="SMART" id="SM00033">
    <property type="entry name" value="CH"/>
    <property type="match status" value="2"/>
</dbReference>
<dbReference type="SMART" id="SM00150">
    <property type="entry name" value="SPEC"/>
    <property type="match status" value="22"/>
</dbReference>
<dbReference type="SMART" id="SM00456">
    <property type="entry name" value="WW"/>
    <property type="match status" value="1"/>
</dbReference>
<dbReference type="SMART" id="SM00291">
    <property type="entry name" value="ZnF_ZZ"/>
    <property type="match status" value="1"/>
</dbReference>
<dbReference type="SUPFAM" id="SSF47576">
    <property type="entry name" value="Calponin-homology domain, CH-domain"/>
    <property type="match status" value="1"/>
</dbReference>
<dbReference type="SUPFAM" id="SSF47473">
    <property type="entry name" value="EF-hand"/>
    <property type="match status" value="2"/>
</dbReference>
<dbReference type="SUPFAM" id="SSF57850">
    <property type="entry name" value="RING/U-box"/>
    <property type="match status" value="1"/>
</dbReference>
<dbReference type="SUPFAM" id="SSF46966">
    <property type="entry name" value="Spectrin repeat"/>
    <property type="match status" value="16"/>
</dbReference>
<dbReference type="SUPFAM" id="SSF51045">
    <property type="entry name" value="WW domain"/>
    <property type="match status" value="1"/>
</dbReference>
<dbReference type="PROSITE" id="PS00019">
    <property type="entry name" value="ACTININ_1"/>
    <property type="match status" value="1"/>
</dbReference>
<dbReference type="PROSITE" id="PS00020">
    <property type="entry name" value="ACTININ_2"/>
    <property type="match status" value="1"/>
</dbReference>
<dbReference type="PROSITE" id="PS50021">
    <property type="entry name" value="CH"/>
    <property type="match status" value="2"/>
</dbReference>
<dbReference type="PROSITE" id="PS01159">
    <property type="entry name" value="WW_DOMAIN_1"/>
    <property type="match status" value="1"/>
</dbReference>
<dbReference type="PROSITE" id="PS50020">
    <property type="entry name" value="WW_DOMAIN_2"/>
    <property type="match status" value="1"/>
</dbReference>
<dbReference type="PROSITE" id="PS01357">
    <property type="entry name" value="ZF_ZZ_1"/>
    <property type="match status" value="1"/>
</dbReference>
<dbReference type="PROSITE" id="PS50135">
    <property type="entry name" value="ZF_ZZ_2"/>
    <property type="match status" value="1"/>
</dbReference>
<name>DMD_CANLF</name>
<keyword id="KW-0009">Actin-binding</keyword>
<keyword id="KW-0106">Calcium</keyword>
<keyword id="KW-1003">Cell membrane</keyword>
<keyword id="KW-0963">Cytoplasm</keyword>
<keyword id="KW-0206">Cytoskeleton</keyword>
<keyword id="KW-0472">Membrane</keyword>
<keyword id="KW-0479">Metal-binding</keyword>
<keyword id="KW-0597">Phosphoprotein</keyword>
<keyword id="KW-0628">Postsynaptic cell membrane</keyword>
<keyword id="KW-1185">Reference proteome</keyword>
<keyword id="KW-0677">Repeat</keyword>
<keyword id="KW-0770">Synapse</keyword>
<keyword id="KW-0862">Zinc</keyword>
<keyword id="KW-0863">Zinc-finger</keyword>
<reference key="1">
    <citation type="journal article" date="1998" name="Muscle Nerve">
        <title>Alternative dystrophin gene transcripts in golden retriever muscular dystrophy.</title>
        <authorList>
            <person name="Schatzberg S.J."/>
            <person name="Anderson L.V."/>
            <person name="Wilton S.D."/>
            <person name="Kornegay J.N."/>
            <person name="Mann C.J."/>
            <person name="Solomon G.G."/>
            <person name="Sharp N.J."/>
        </authorList>
    </citation>
    <scope>NUCLEOTIDE SEQUENCE [MRNA]</scope>
    <scope>ALTERNATIVE SPLICING</scope>
    <source>
        <strain>Golden retriever</strain>
    </source>
</reference>
<protein>
    <recommendedName>
        <fullName>Dystrophin</fullName>
    </recommendedName>
</protein>
<proteinExistence type="evidence at transcript level"/>
<evidence type="ECO:0000250" key="1"/>
<evidence type="ECO:0000250" key="2">
    <source>
        <dbReference type="UniProtKB" id="P11530"/>
    </source>
</evidence>
<evidence type="ECO:0000250" key="3">
    <source>
        <dbReference type="UniProtKB" id="P11531"/>
    </source>
</evidence>
<evidence type="ECO:0000250" key="4">
    <source>
        <dbReference type="UniProtKB" id="P11532"/>
    </source>
</evidence>
<evidence type="ECO:0000255" key="5">
    <source>
        <dbReference type="PROSITE-ProRule" id="PRU00044"/>
    </source>
</evidence>
<evidence type="ECO:0000255" key="6">
    <source>
        <dbReference type="PROSITE-ProRule" id="PRU00224"/>
    </source>
</evidence>
<evidence type="ECO:0000255" key="7">
    <source>
        <dbReference type="PROSITE-ProRule" id="PRU00228"/>
    </source>
</evidence>
<evidence type="ECO:0000256" key="8">
    <source>
        <dbReference type="SAM" id="MobiDB-lite"/>
    </source>
</evidence>
<sequence>MLWWEEVEDCYEREDVQKKTFTKWVNAQFSKFGKQHIENLFSDLQDGRRLLDLLEGLTGQKLPKEKGSTRVHALNNVNKALRVLQKNNVDLVNIGSTDIVDGNHKLTLGLIWNIILHWQVKNVMKNIMAGLQQTNSEKILLSWVRQSTRNYPQVNVINFTTSWSDGLALNALIHSHRPDLFDWNSVVCQQSATQRLEHAFNIAKYQLGIEKLLDPEDVATTYPDKKSILMYITSLFQVLPQQVSIEAIQEVEMLPRPSQVTREEHFQIHHQMHYSQQITVSLAQGYERAPSFPKPRFKSYAYTQAAYVTTSDPTRSPLPSQHLETPEDKSFGRSLTETEANLDSYQTALEEVLSWLLSAEDALQAQGEISNDVEEVKEQFHTHEGYMMDLTSHQGRVGNVLQLGSQLIGTGKLSEDEETEVQEQMNLLNSRWECLRVASMEKQSNLHKVLMDLQNQQLKELNDWLTKTEERTRKMEKEPLGPDIEDLKRQVQQHKVLQEDLEQEQVRVNSLTHMVVVVDESSGDHATAALEEQLKVLGDRWANICRWTEDRWVLLQDILLKWQRFTEEQCLFSAWLSEKEDAVNKIHTTGFKDQSEVLSNLQKLAVLKTDLEKKKQTMDKLCSLNQDLLSALKNTVVAHKMEAWLDNFAQRWDNLVQKLEKSSAQISQAVTTTQPSLTQTTVMETVTMVTTREHILVKHAQEELPPPPPQKKRQIIVDSEIRKRLDVDITELHSWITRSEAVLQSPEFAIYRKEGNFSDLKEKVNAIEREKAEKFRKLQDASRSAQALVEQMVNEGVNADSIKQASEQLNSRWIEFCQLLSERLNWLEYQNNIITFYNQLQQLEQMTTTAENWLKTQPTTTSEPTAIKSQLKICKDEINRLSALQPQIERLKIQSIALKEKGQGPMFLDADFVAFTNHFNQVFADVQAREKELQTIFDSLPPMRYQETMSTILTWIQQSETKLSIPQVTVTEYDIMEQRLGELQALQSSLQEQQNGLNYLSTTVKEMSKKAPLSDISRKYQSEFEEIEGRWKKLSSQLVEHCQKLEEQMAKLRKIQNHIKTLKKWITEVDVFLKEEWPALGDSEILKRQLKQCRLLVNDIQTIQPSLNSVNEGAQKMKNEAEPEFAGRLETELRELNTQWDYMCRQVYARKEALKGGLDKTVSLQKDLSEMHEWMTQAEEEYLERDFEYKTPDELQTAVEEMKRAKEEAQQKEAKVKLLTESVNSVIAQAPPAAQEALKKELDTLTTNYQWLCTRLNGKCKTLEEVWACWHELLSYLEKANKWLSEVEVKLKTTENISGGAEEIAEVLDSLENLMQHSEDNPNQIRILAQTLTDGGVMDELINEELETFNSRWRELHEEAVRRQKLLEQSIQSAQEIEKSLHLIQESLSSIDKQLAAYIADKVDAAQMPQEAQKIQSDLTSHEISLEEMKKHNQGKETAQRVLSQIDVAQKKLQDVSMKFRLFQKPANFEQRLQESKMILDEVKMHLPALETKSVEQEVVQSQLNHCVNLYKSLSEVKSEVEMVIKTGRQIVQKKQTENPKELDERVTALKLHYNELGAKVTERKQQLEKCLKLSRKMRKEMNALTEWLAATDMELTKRSAVEGMPSNLDSEVAWGKATQKEIEKQKVHLKSVTEVGEALKTVLGKKEMLVEDKLSLLNSNWIAVTSRAEEWLNLLLEYQKHMETFDQNVDYITNWIIQADALLDESEKKKPQQKEDILKRLKAEMNDIRPKVDSTRDQAANLMANRGDHCRKVVEPKISELNHRFAAISHRIKTGKASIPLKELEQFNSDIQKLLEPLEAEIQQGVNLKEEDFNKDMSEDNEGTVKELLQRGDNLQQRITDERKREEIKIKQQLLQTKHNALKDLRSQRRKKALEISHQWYQYKRQADDLLKCLDDIEKKLASLPEPRDERKIKEIDRELQKKKEELNAVRRQAEGLSEDGAAMAVEPTQIQLSKRWREIESKFAQFRRLNFAQIHTVHEESVVAMTEDMPLEISYVPSTYLTEITHVSQALSEVEELLNAPDLCAQDFEDLFKQEESLKNIKDSLQQISGRIDIIHNKKTAALHSATPAERAKLQEALSRLDFQWERVNNMYKDRQGRFDRSVEKWRRFHYDMKILNQWLTEAEQFLKKTQIPENWEHAKYKWYLKELQDGIGQRQSVVRVLNATGEEIIQQSSKTDASILQEKLGSLNLRWQEVCKQLAERKKRLEEQKNILSEFQRDVNEFVLWLEEADNVANIPLEPGNEQQLKEKLEQVKLLAEELPLRQGILKQLNETGGTVLVSAPLSPEEQDKLENKLKQTNLQWIKVSRNLPEKQEEIEAHVKDLGQLEEQLNHLLLWLSPIRNQLEIYNQPNQTGPFDIKEIEVAVQAKQPDVEGILSKGQHLYKEKPATQPAKRKLEDLSSDWKVVTQLLQELRAKQPGPAPGLTTVRAPPSQTVTLVTQPAVTKETAISKLEMPSSLLLEVPALADFNRAWTELTDWLSLLDRVIKSQRVMVGDLEDINEMIIKQKATLQDLEQRRPQLEELITAAQNLKNKTSNQEARTIITDRIERIQSQWDEVQEHLQNRRLQLTEMLKDSTQWLEAKEEAEQVLGQARAKLESWKEAPYTVDAIQKKITETKQLAKDLRQWQINVDVANDLALKLLRDYSADDTRKVHMITENINASWASIHKRLSEREAALEETHRLLQQFPLDLEKFLAWLTEAETTANVLQDATHKERLLEDSKGVRELMKQWQDLQGEIEAHTDIYHNLDENGQKVLRSLEGSDDAALLQRRLDNMNFKWSELRKKSLNIRSHLEASSDQWKRLHLSLQELLVWLQLKDDELSRQAPIGGDFPAVQKQNDVHRAFKRELKTKEPVIMSTLETVRIFLTEQPLEGLEKLYQEPRELPPEERAQNVTRLLRKQAEEVNTQWEKLNVHSADWQRKIDEALERLQELQEATDELDLKLRQAEVIKGSWQPVGDLLIDSLQDHLEKVKALRGEITPLKENVSYVNDLARQLTTLGIQLSPYNLNTLEDLNTRWKLLQVAIEDRIRQLHEAHRDFGPASQHFLSTSVQGPWERAISPNKVPYYINHETQTTCWDHPKMTELYQSLADLNNVRFSAYRTAMKLRRLQKALCLDLLSLSAACDALDQHNLKQNDQPMDILQVINCLTTIYDRLEQEHNNLVNVPLCVDMCLNWLLNVYDTGRTGRIRVLSFKTGIISLCKAHLEDKYRYLFKQVASSTGFCDQRRLGLLLHDSIQIPRQLGEVASFGGSNIEPSVRSCFQFANNKPEIEAALFLDWMRLEPQSMVWLPVLHRVAAAETAKHQAKCNICKECPIIGFRYRSLKHFNYDICQSCFFSGRVAKGHKMHYPMVEYCTPTTSGEDVRDFAKVLKNKFRTKRYFAKHPRMGYLPVQTVLEGDNMETPVTLINFWPVDSAPASSPQLSHDDTHSRIEHYASRLKKMENSNGSYLNDSISPNESIDDEHLLIQHYWRSLNQESPLSQPRSPAQILISLESEERGELERILADLEGRNRNLQAEYDRLKQQHEHKGLSPLPSPPEMMPTSPQSPRDAELIAEAKLLRQHKGRLEARMQILEDHNKQLESQLHRLRQLLEQPQAEAKVNGTTVSSPSTSLQRSDSSQPMLLRVVGSQTSESMGEEDLLSPPQDTSTGLEEVMEQLNHSFPSSRGRNTPGKPMREDTM</sequence>
<accession>O97592</accession>
<gene>
    <name type="primary">DMD</name>
</gene>
<feature type="chain" id="PRO_0000076074" description="Dystrophin">
    <location>
        <begin position="1"/>
        <end position="3680"/>
    </location>
</feature>
<feature type="domain" description="Calponin-homology (CH) 1" evidence="5">
    <location>
        <begin position="15"/>
        <end position="119"/>
    </location>
</feature>
<feature type="domain" description="Calponin-homology (CH) 2" evidence="5">
    <location>
        <begin position="134"/>
        <end position="240"/>
    </location>
</feature>
<feature type="repeat" description="Spectrin 1">
    <location>
        <begin position="340"/>
        <end position="448"/>
    </location>
</feature>
<feature type="repeat" description="Spectrin 2">
    <location>
        <begin position="449"/>
        <end position="557"/>
    </location>
</feature>
<feature type="repeat" description="Spectrin 3">
    <location>
        <begin position="560"/>
        <end position="668"/>
    </location>
</feature>
<feature type="repeat" description="Spectrin 4">
    <location>
        <begin position="720"/>
        <end position="829"/>
    </location>
</feature>
<feature type="repeat" description="Spectrin 5">
    <location>
        <begin position="831"/>
        <end position="935"/>
    </location>
</feature>
<feature type="repeat" description="Spectrin 6">
    <location>
        <begin position="944"/>
        <end position="1047"/>
    </location>
</feature>
<feature type="repeat" description="Spectrin 7">
    <location>
        <begin position="1050"/>
        <end position="1156"/>
    </location>
</feature>
<feature type="repeat" description="Spectrin 8">
    <location>
        <begin position="1159"/>
        <end position="1265"/>
    </location>
</feature>
<feature type="repeat" description="Spectrin 9">
    <location>
        <begin position="1268"/>
        <end position="1369"/>
    </location>
</feature>
<feature type="repeat" description="Spectrin 10">
    <location>
        <begin position="1370"/>
        <end position="1465"/>
    </location>
</feature>
<feature type="repeat" description="Spectrin 11">
    <location>
        <begin position="1470"/>
        <end position="1570"/>
    </location>
</feature>
<feature type="repeat" description="Spectrin 12">
    <location>
        <begin position="1573"/>
        <end position="1678"/>
    </location>
</feature>
<feature type="repeat" description="Spectrin 13">
    <location>
        <begin position="1681"/>
        <end position="1780"/>
    </location>
</feature>
<feature type="repeat" description="Spectrin 14">
    <location>
        <begin position="1781"/>
        <end position="1876"/>
    </location>
</feature>
<feature type="repeat" description="Spectrin 15">
    <location>
        <begin position="1879"/>
        <end position="1981"/>
    </location>
</feature>
<feature type="repeat" description="Spectrin 16">
    <location>
        <begin position="1994"/>
        <end position="2103"/>
    </location>
</feature>
<feature type="repeat" description="Spectrin 17">
    <location>
        <begin position="2106"/>
        <end position="2210"/>
    </location>
</feature>
<feature type="repeat" description="Spectrin 18">
    <location>
        <begin position="2213"/>
        <end position="2320"/>
    </location>
</feature>
<feature type="repeat" description="Spectrin 19">
    <location>
        <begin position="2321"/>
        <end position="2418"/>
    </location>
</feature>
<feature type="repeat" description="Spectrin 20">
    <location>
        <begin position="2470"/>
        <end position="2572"/>
    </location>
</feature>
<feature type="repeat" description="Spectrin 21">
    <location>
        <begin position="2575"/>
        <end position="2681"/>
    </location>
</feature>
<feature type="repeat" description="Spectrin 22">
    <location>
        <begin position="2684"/>
        <end position="2797"/>
    </location>
</feature>
<feature type="repeat" description="Spectrin 23">
    <location>
        <begin position="2803"/>
        <end position="2925"/>
    </location>
</feature>
<feature type="repeat" description="Spectrin 24">
    <location>
        <begin position="2930"/>
        <end position="3035"/>
    </location>
</feature>
<feature type="domain" description="WW" evidence="6">
    <location>
        <begin position="3050"/>
        <end position="3083"/>
    </location>
</feature>
<feature type="zinc finger region" description="ZZ-type; degenerate" evidence="7">
    <location>
        <begin position="3303"/>
        <end position="3359"/>
    </location>
</feature>
<feature type="region of interest" description="Actin-binding">
    <location>
        <begin position="1"/>
        <end position="237"/>
    </location>
</feature>
<feature type="region of interest" description="ANK2- and ANK-3 binding" evidence="1">
    <location>
        <begin position="63"/>
        <end position="72"/>
    </location>
</feature>
<feature type="region of interest" description="Disordered" evidence="8">
    <location>
        <begin position="310"/>
        <end position="332"/>
    </location>
</feature>
<feature type="region of interest" description="Interaction with SYNM" evidence="1">
    <location>
        <begin position="1418"/>
        <end position="1915"/>
    </location>
</feature>
<feature type="region of interest" description="Interaction with SYNM" evidence="1">
    <location>
        <begin position="3053"/>
        <end position="3403"/>
    </location>
</feature>
<feature type="region of interest" description="Binds to SNTB1" evidence="1">
    <location>
        <begin position="3461"/>
        <end position="3513"/>
    </location>
</feature>
<feature type="region of interest" description="Disordered" evidence="8">
    <location>
        <begin position="3524"/>
        <end position="3549"/>
    </location>
</feature>
<feature type="region of interest" description="Disordered" evidence="8">
    <location>
        <begin position="3595"/>
        <end position="3680"/>
    </location>
</feature>
<feature type="compositionally biased region" description="Polar residues" evidence="8">
    <location>
        <begin position="310"/>
        <end position="323"/>
    </location>
</feature>
<feature type="compositionally biased region" description="Polar residues" evidence="8">
    <location>
        <begin position="3602"/>
        <end position="3621"/>
    </location>
</feature>
<feature type="compositionally biased region" description="Polar residues" evidence="8">
    <location>
        <begin position="3658"/>
        <end position="3668"/>
    </location>
</feature>
<feature type="binding site" evidence="7">
    <location>
        <position position="3308"/>
    </location>
    <ligand>
        <name>Zn(2+)</name>
        <dbReference type="ChEBI" id="CHEBI:29105"/>
    </ligand>
</feature>
<feature type="binding site" evidence="7">
    <location>
        <position position="3311"/>
    </location>
    <ligand>
        <name>Zn(2+)</name>
        <dbReference type="ChEBI" id="CHEBI:29105"/>
    </ligand>
</feature>
<feature type="binding site" evidence="7">
    <location>
        <position position="3332"/>
    </location>
    <ligand>
        <name>Zn(2+)</name>
        <dbReference type="ChEBI" id="CHEBI:29105"/>
    </ligand>
</feature>
<feature type="binding site" evidence="7">
    <location>
        <position position="3335"/>
    </location>
    <ligand>
        <name>Zn(2+)</name>
        <dbReference type="ChEBI" id="CHEBI:29105"/>
    </ligand>
</feature>
<feature type="modified residue" description="Phosphoserine" evidence="4">
    <location>
        <position position="3478"/>
    </location>
</feature>
<feature type="modified residue" description="Phosphoserine" evidence="4">
    <location>
        <position position="3485"/>
    </location>
</feature>
<feature type="modified residue" description="Phosphoserine" evidence="4">
    <location>
        <position position="3495"/>
    </location>
</feature>
<feature type="modified residue" description="Phosphoserine" evidence="4">
    <location>
        <position position="3607"/>
    </location>
</feature>
<feature type="modified residue" description="Phosphoserine" evidence="4">
    <location>
        <position position="3608"/>
    </location>
</feature>
<feature type="modified residue" description="Phosphoserine" evidence="4">
    <location>
        <position position="3612"/>
    </location>
</feature>
<feature type="modified residue" description="Phosphoserine" evidence="4">
    <location>
        <position position="3618"/>
    </location>
</feature>
<feature type="modified residue" description="Phosphoserine" evidence="4">
    <location>
        <position position="3619"/>
    </location>
</feature>
<feature type="modified residue" description="Phosphoserine" evidence="4">
    <location>
        <position position="3661"/>
    </location>
</feature>